<proteinExistence type="predicted"/>
<reference key="1">
    <citation type="journal article" date="1998" name="Science">
        <title>Genome sequence of the nematode C. elegans: a platform for investigating biology.</title>
        <authorList>
            <consortium name="The C. elegans sequencing consortium"/>
        </authorList>
    </citation>
    <scope>NUCLEOTIDE SEQUENCE [LARGE SCALE GENOMIC DNA]</scope>
    <source>
        <strain>Bristol N2</strain>
    </source>
</reference>
<name>YPT1_CAEEL</name>
<dbReference type="EMBL" id="FO081312">
    <property type="protein sequence ID" value="CCD70699.1"/>
    <property type="molecule type" value="Genomic_DNA"/>
</dbReference>
<dbReference type="PIR" id="S44638">
    <property type="entry name" value="S44638"/>
</dbReference>
<dbReference type="RefSeq" id="NP_498475.1">
    <property type="nucleotide sequence ID" value="NM_066074.7"/>
</dbReference>
<dbReference type="SMR" id="P41879"/>
<dbReference type="BioGRID" id="41164">
    <property type="interactions" value="2"/>
</dbReference>
<dbReference type="DIP" id="DIP-25151N"/>
<dbReference type="FunCoup" id="P41879">
    <property type="interactions" value="1878"/>
</dbReference>
<dbReference type="STRING" id="6239.F37A4.1.1"/>
<dbReference type="ESTHER" id="caeel-ypt1">
    <property type="family name" value="ABHD16"/>
</dbReference>
<dbReference type="MEROPS" id="S09.022"/>
<dbReference type="PaxDb" id="6239-F37A4.1.1"/>
<dbReference type="PeptideAtlas" id="P41879"/>
<dbReference type="EnsemblMetazoa" id="F37A4.1.1">
    <property type="protein sequence ID" value="F37A4.1.1"/>
    <property type="gene ID" value="WBGene00018131"/>
</dbReference>
<dbReference type="EnsemblMetazoa" id="F37A4.1.2">
    <property type="protein sequence ID" value="F37A4.1.2"/>
    <property type="gene ID" value="WBGene00018131"/>
</dbReference>
<dbReference type="GeneID" id="175948"/>
<dbReference type="KEGG" id="cel:CELE_F37A4.1"/>
<dbReference type="UCSC" id="F37A4.1.2">
    <property type="organism name" value="c. elegans"/>
</dbReference>
<dbReference type="AGR" id="WB:WBGene00018131"/>
<dbReference type="CTD" id="175948"/>
<dbReference type="WormBase" id="F37A4.1">
    <property type="protein sequence ID" value="CE00711"/>
    <property type="gene ID" value="WBGene00018131"/>
</dbReference>
<dbReference type="eggNOG" id="KOG1553">
    <property type="taxonomic scope" value="Eukaryota"/>
</dbReference>
<dbReference type="GeneTree" id="ENSGT00940000166834"/>
<dbReference type="HOGENOM" id="CLU_040705_2_0_1"/>
<dbReference type="InParanoid" id="P41879"/>
<dbReference type="OMA" id="THCTQLP"/>
<dbReference type="OrthoDB" id="6412627at2759"/>
<dbReference type="PhylomeDB" id="P41879"/>
<dbReference type="PRO" id="PR:P41879"/>
<dbReference type="Proteomes" id="UP000001940">
    <property type="component" value="Chromosome III"/>
</dbReference>
<dbReference type="Bgee" id="WBGene00018131">
    <property type="expression patterns" value="Expressed in germ line (C elegans) and 4 other cell types or tissues"/>
</dbReference>
<dbReference type="GO" id="GO:0047372">
    <property type="term" value="F:monoacylglycerol lipase activity"/>
    <property type="evidence" value="ECO:0000318"/>
    <property type="project" value="GO_Central"/>
</dbReference>
<dbReference type="GO" id="GO:0004620">
    <property type="term" value="F:phospholipase activity"/>
    <property type="evidence" value="ECO:0000318"/>
    <property type="project" value="GO_Central"/>
</dbReference>
<dbReference type="GO" id="GO:0052651">
    <property type="term" value="P:monoacylglycerol catabolic process"/>
    <property type="evidence" value="ECO:0000318"/>
    <property type="project" value="GO_Central"/>
</dbReference>
<dbReference type="GO" id="GO:0006660">
    <property type="term" value="P:phosphatidylserine catabolic process"/>
    <property type="evidence" value="ECO:0000318"/>
    <property type="project" value="GO_Central"/>
</dbReference>
<dbReference type="Gene3D" id="3.40.50.1820">
    <property type="entry name" value="alpha/beta hydrolase"/>
    <property type="match status" value="1"/>
</dbReference>
<dbReference type="InterPro" id="IPR000073">
    <property type="entry name" value="AB_hydrolase_1"/>
</dbReference>
<dbReference type="InterPro" id="IPR029058">
    <property type="entry name" value="AB_hydrolase_fold"/>
</dbReference>
<dbReference type="InterPro" id="IPR054518">
    <property type="entry name" value="ABHD16_N"/>
</dbReference>
<dbReference type="PANTHER" id="PTHR12277">
    <property type="entry name" value="ALPHA/BETA HYDROLASE DOMAIN-CONTAINING PROTEIN"/>
    <property type="match status" value="1"/>
</dbReference>
<dbReference type="PANTHER" id="PTHR12277:SF72">
    <property type="entry name" value="BAT5L PROTEIN"/>
    <property type="match status" value="1"/>
</dbReference>
<dbReference type="Pfam" id="PF22990">
    <property type="entry name" value="ABHD16_N"/>
    <property type="match status" value="1"/>
</dbReference>
<dbReference type="Pfam" id="PF00561">
    <property type="entry name" value="Abhydrolase_1"/>
    <property type="match status" value="1"/>
</dbReference>
<dbReference type="SUPFAM" id="SSF53474">
    <property type="entry name" value="alpha/beta-Hydrolases"/>
    <property type="match status" value="1"/>
</dbReference>
<sequence>MPSFWTQISGPRLYGIFGQPNRQEPTLENLGNTVISFSAGIYYIASSLAFGPVILCYLYSRDWLTPAGMLTILKYAGYLTLIGYGARTFGRLFDETNSRFLDIWENEKNKKDDNSHAALKKYDFELLDVIPDFVARPNSDLWHLKPEVAEAGVVTRGLASWAIHAFGRHLIYPGSMALLKYMMRPNLNAARKLLVQNKNGQRLWIKSSEGDTLDAMFLRGTNQSQDLIICFEGNAGFYEIGVMNSPAQLGYTTLGFNLPGFGESTGLPYAVNTLAAADAVMQYAIQVLGYRQENIVLFGWSIGGFPVAWLASNYPNVKAVVLDATFDDLLPLALFRMPTFFSTIVEHAIRNHMNLQIDKLLARYKGPIRLIRRLQEEILTTAVDDQPENVRRATNRINWLLKSIIKDRHPELIQNLEPQVDRWLDMTPTERLMHSGVSLREESTQRKRLFDACNHYLIDFDANHVTPLDPQYFNIPHGRDTF</sequence>
<keyword id="KW-1185">Reference proteome</keyword>
<evidence type="ECO:0000255" key="1"/>
<organism>
    <name type="scientific">Caenorhabditis elegans</name>
    <dbReference type="NCBI Taxonomy" id="6239"/>
    <lineage>
        <taxon>Eukaryota</taxon>
        <taxon>Metazoa</taxon>
        <taxon>Ecdysozoa</taxon>
        <taxon>Nematoda</taxon>
        <taxon>Chromadorea</taxon>
        <taxon>Rhabditida</taxon>
        <taxon>Rhabditina</taxon>
        <taxon>Rhabditomorpha</taxon>
        <taxon>Rhabditoidea</taxon>
        <taxon>Rhabditidae</taxon>
        <taxon>Peloderinae</taxon>
        <taxon>Caenorhabditis</taxon>
    </lineage>
</organism>
<feature type="chain" id="PRO_0000065325" description="Uncharacterized protein F37A4.1">
    <location>
        <begin position="1"/>
        <end position="482"/>
    </location>
</feature>
<feature type="domain" description="AB hydrolase-1" evidence="1">
    <location>
        <begin position="231"/>
        <end position="459"/>
    </location>
</feature>
<accession>P41879</accession>
<protein>
    <recommendedName>
        <fullName>Uncharacterized protein F37A4.1</fullName>
    </recommendedName>
</protein>
<gene>
    <name type="ORF">F37A4.1</name>
</gene>